<comment type="function">
    <text evidence="1">Covalently attaches a chromophore to Cys residue(s) of phycobiliproteins.</text>
</comment>
<comment type="similarity">
    <text evidence="1">Belongs to the CpcS/CpeS biliprotein lyase family.</text>
</comment>
<organism>
    <name type="scientific">Trichodesmium erythraeum (strain IMS101)</name>
    <dbReference type="NCBI Taxonomy" id="203124"/>
    <lineage>
        <taxon>Bacteria</taxon>
        <taxon>Bacillati</taxon>
        <taxon>Cyanobacteriota</taxon>
        <taxon>Cyanophyceae</taxon>
        <taxon>Oscillatoriophycideae</taxon>
        <taxon>Oscillatoriales</taxon>
        <taxon>Microcoleaceae</taxon>
        <taxon>Trichodesmium</taxon>
    </lineage>
</organism>
<feature type="chain" id="PRO_0000403148" description="Chromophore lyase CpcS/CpeS 3">
    <location>
        <begin position="1"/>
        <end position="173"/>
    </location>
</feature>
<proteinExistence type="inferred from homology"/>
<reference key="1">
    <citation type="journal article" date="2015" name="Proc. Natl. Acad. Sci. U.S.A.">
        <title>Trichodesmium genome maintains abundant, widespread noncoding DNA in situ, despite oligotrophic lifestyle.</title>
        <authorList>
            <person name="Walworth N."/>
            <person name="Pfreundt U."/>
            <person name="Nelson W.C."/>
            <person name="Mincer T."/>
            <person name="Heidelberg J.F."/>
            <person name="Fu F."/>
            <person name="Waterbury J.B."/>
            <person name="Glavina del Rio T."/>
            <person name="Goodwin L."/>
            <person name="Kyrpides N.C."/>
            <person name="Land M.L."/>
            <person name="Woyke T."/>
            <person name="Hutchins D.A."/>
            <person name="Hess W.R."/>
            <person name="Webb E.A."/>
        </authorList>
    </citation>
    <scope>NUCLEOTIDE SEQUENCE [LARGE SCALE GENOMIC DNA]</scope>
    <source>
        <strain>IMS101</strain>
    </source>
</reference>
<sequence length="173" mass="19510">MDIEEFVERSIGCWRSQRSGHSLALSHFEEVRSTIDIVDLPKTDHEVKNLCDSSGVDIENAVSPFKMSWEGESDWDENEIIKGSCVLVPIPEDDNLKKGKLLRSQGYAETVSAVGEYYITEDDTFVLYTEYESAAAEEKIWFHTSNLRFRVSLIKTSDGNGVLTASFSSEIRS</sequence>
<keyword id="KW-0456">Lyase</keyword>
<dbReference type="EC" id="4.-.-.-" evidence="1"/>
<dbReference type="EMBL" id="CP000393">
    <property type="protein sequence ID" value="ABG53114.1"/>
    <property type="molecule type" value="Genomic_DNA"/>
</dbReference>
<dbReference type="RefSeq" id="WP_011613444.1">
    <property type="nucleotide sequence ID" value="NC_008312.1"/>
</dbReference>
<dbReference type="SMR" id="Q10XB0"/>
<dbReference type="STRING" id="203124.Tery_4106"/>
<dbReference type="KEGG" id="ter:Tery_4106"/>
<dbReference type="eggNOG" id="ENOG502ZBV6">
    <property type="taxonomic scope" value="Bacteria"/>
</dbReference>
<dbReference type="HOGENOM" id="CLU_096258_0_0_3"/>
<dbReference type="OrthoDB" id="554080at2"/>
<dbReference type="GO" id="GO:0016829">
    <property type="term" value="F:lyase activity"/>
    <property type="evidence" value="ECO:0007669"/>
    <property type="project" value="UniProtKB-KW"/>
</dbReference>
<dbReference type="CDD" id="cd19433">
    <property type="entry name" value="lipocalin_CpcS-CpeS"/>
    <property type="match status" value="1"/>
</dbReference>
<dbReference type="Gene3D" id="2.40.128.20">
    <property type="match status" value="1"/>
</dbReference>
<dbReference type="HAMAP" id="MF_01459">
    <property type="entry name" value="Chrphore_lyase_CpxS"/>
    <property type="match status" value="1"/>
</dbReference>
<dbReference type="InterPro" id="IPR012674">
    <property type="entry name" value="Calycin"/>
</dbReference>
<dbReference type="InterPro" id="IPR018536">
    <property type="entry name" value="CpcS/CpeS"/>
</dbReference>
<dbReference type="Pfam" id="PF09367">
    <property type="entry name" value="CpeS"/>
    <property type="match status" value="1"/>
</dbReference>
<evidence type="ECO:0000255" key="1">
    <source>
        <dbReference type="HAMAP-Rule" id="MF_01459"/>
    </source>
</evidence>
<protein>
    <recommendedName>
        <fullName evidence="1">Chromophore lyase CpcS/CpeS 3</fullName>
        <ecNumber evidence="1">4.-.-.-</ecNumber>
    </recommendedName>
</protein>
<accession>Q10XB0</accession>
<gene>
    <name evidence="1" type="primary">cpcS3</name>
    <name type="ordered locus">Tery_4106</name>
</gene>
<name>CPXS3_TRIEI</name>